<reference key="1">
    <citation type="journal article" date="2004" name="Nat. Biotechnol.">
        <title>The genome sequence of the extreme thermophile Thermus thermophilus.</title>
        <authorList>
            <person name="Henne A."/>
            <person name="Brueggemann H."/>
            <person name="Raasch C."/>
            <person name="Wiezer A."/>
            <person name="Hartsch T."/>
            <person name="Liesegang H."/>
            <person name="Johann A."/>
            <person name="Lienard T."/>
            <person name="Gohl O."/>
            <person name="Martinez-Arias R."/>
            <person name="Jacobi C."/>
            <person name="Starkuviene V."/>
            <person name="Schlenczeck S."/>
            <person name="Dencker S."/>
            <person name="Huber R."/>
            <person name="Klenk H.-P."/>
            <person name="Kramer W."/>
            <person name="Merkl R."/>
            <person name="Gottschalk G."/>
            <person name="Fritz H.-J."/>
        </authorList>
    </citation>
    <scope>NUCLEOTIDE SEQUENCE [LARGE SCALE GENOMIC DNA]</scope>
    <source>
        <strain>ATCC BAA-163 / DSM 7039 / HB27</strain>
    </source>
</reference>
<keyword id="KW-0143">Chaperone</keyword>
<keyword id="KW-0963">Cytoplasm</keyword>
<keyword id="KW-1015">Disulfide bond</keyword>
<keyword id="KW-0676">Redox-active center</keyword>
<keyword id="KW-0862">Zinc</keyword>
<name>HSLO_THET2</name>
<protein>
    <recommendedName>
        <fullName evidence="1">33 kDa chaperonin</fullName>
    </recommendedName>
    <alternativeName>
        <fullName evidence="1">Heat shock protein 33 homolog</fullName>
        <shortName evidence="1">HSP33</shortName>
    </alternativeName>
</protein>
<sequence>MGRILRGLAGGGDLRVVAAETTDIVEEARRRHGLSPTATAALGRAMTGALLLAQLLLKTPKERITLRVEGTGPLGGLVVEADAFGHVRGYVKNPRAEVPLREDGKLNVGELVGAGALRVDRSLPSGEVYTSTVPLVSGEIAEDLAHYLWQSEQIPSAVLLGVRVKGEGEVEVAGGVAVQVMPGAKEEVLGRLEANLKDLPGLTPLLRERGLEGALEALLAGLGFERTDLRALGYFQNEIPARFRCRCNREKALEALVFFTPEEREEMIVKEGGAEVVCHWCGEVYRFSPEEVRSLVAEVRCPDCGALWLYPKGDGTLARIEGETCRCGRKVELPSETRPQA</sequence>
<feature type="chain" id="PRO_0000238108" description="33 kDa chaperonin">
    <location>
        <begin position="1"/>
        <end position="341"/>
    </location>
</feature>
<feature type="disulfide bond" description="Redox-active" evidence="1">
    <location>
        <begin position="245"/>
        <end position="247"/>
    </location>
</feature>
<feature type="disulfide bond" description="Redox-active" evidence="1">
    <location>
        <begin position="278"/>
        <end position="281"/>
    </location>
</feature>
<dbReference type="EMBL" id="AE017221">
    <property type="protein sequence ID" value="AAS80886.1"/>
    <property type="molecule type" value="Genomic_DNA"/>
</dbReference>
<dbReference type="RefSeq" id="WP_011172983.1">
    <property type="nucleotide sequence ID" value="NC_005835.1"/>
</dbReference>
<dbReference type="SMR" id="Q72KA9"/>
<dbReference type="KEGG" id="tth:TT_C0538"/>
<dbReference type="eggNOG" id="COG1281">
    <property type="taxonomic scope" value="Bacteria"/>
</dbReference>
<dbReference type="HOGENOM" id="CLU_054493_1_0_0"/>
<dbReference type="OrthoDB" id="9776534at2"/>
<dbReference type="Proteomes" id="UP000000592">
    <property type="component" value="Chromosome"/>
</dbReference>
<dbReference type="GO" id="GO:0005737">
    <property type="term" value="C:cytoplasm"/>
    <property type="evidence" value="ECO:0007669"/>
    <property type="project" value="UniProtKB-SubCell"/>
</dbReference>
<dbReference type="GO" id="GO:0044183">
    <property type="term" value="F:protein folding chaperone"/>
    <property type="evidence" value="ECO:0007669"/>
    <property type="project" value="TreeGrafter"/>
</dbReference>
<dbReference type="GO" id="GO:0051082">
    <property type="term" value="F:unfolded protein binding"/>
    <property type="evidence" value="ECO:0007669"/>
    <property type="project" value="UniProtKB-UniRule"/>
</dbReference>
<dbReference type="GO" id="GO:0042026">
    <property type="term" value="P:protein refolding"/>
    <property type="evidence" value="ECO:0007669"/>
    <property type="project" value="TreeGrafter"/>
</dbReference>
<dbReference type="CDD" id="cd00498">
    <property type="entry name" value="Hsp33"/>
    <property type="match status" value="1"/>
</dbReference>
<dbReference type="Gene3D" id="3.55.30.10">
    <property type="entry name" value="Hsp33 domain"/>
    <property type="match status" value="1"/>
</dbReference>
<dbReference type="Gene3D" id="3.90.1280.10">
    <property type="entry name" value="HSP33 redox switch-like"/>
    <property type="match status" value="1"/>
</dbReference>
<dbReference type="HAMAP" id="MF_00117">
    <property type="entry name" value="HslO"/>
    <property type="match status" value="1"/>
</dbReference>
<dbReference type="InterPro" id="IPR000397">
    <property type="entry name" value="Heat_shock_Hsp33"/>
</dbReference>
<dbReference type="InterPro" id="IPR016154">
    <property type="entry name" value="Heat_shock_Hsp33_C"/>
</dbReference>
<dbReference type="InterPro" id="IPR016153">
    <property type="entry name" value="Heat_shock_Hsp33_N"/>
</dbReference>
<dbReference type="NCBIfam" id="NF001033">
    <property type="entry name" value="PRK00114.1"/>
    <property type="match status" value="1"/>
</dbReference>
<dbReference type="PANTHER" id="PTHR30111">
    <property type="entry name" value="33 KDA CHAPERONIN"/>
    <property type="match status" value="1"/>
</dbReference>
<dbReference type="PANTHER" id="PTHR30111:SF1">
    <property type="entry name" value="33 KDA CHAPERONIN"/>
    <property type="match status" value="1"/>
</dbReference>
<dbReference type="Pfam" id="PF01430">
    <property type="entry name" value="HSP33"/>
    <property type="match status" value="1"/>
</dbReference>
<dbReference type="PIRSF" id="PIRSF005261">
    <property type="entry name" value="Heat_shock_Hsp33"/>
    <property type="match status" value="1"/>
</dbReference>
<dbReference type="SUPFAM" id="SSF64397">
    <property type="entry name" value="Hsp33 domain"/>
    <property type="match status" value="1"/>
</dbReference>
<dbReference type="SUPFAM" id="SSF118352">
    <property type="entry name" value="HSP33 redox switch-like"/>
    <property type="match status" value="1"/>
</dbReference>
<accession>Q72KA9</accession>
<organism>
    <name type="scientific">Thermus thermophilus (strain ATCC BAA-163 / DSM 7039 / HB27)</name>
    <dbReference type="NCBI Taxonomy" id="262724"/>
    <lineage>
        <taxon>Bacteria</taxon>
        <taxon>Thermotogati</taxon>
        <taxon>Deinococcota</taxon>
        <taxon>Deinococci</taxon>
        <taxon>Thermales</taxon>
        <taxon>Thermaceae</taxon>
        <taxon>Thermus</taxon>
    </lineage>
</organism>
<gene>
    <name evidence="1" type="primary">hslO</name>
    <name type="ordered locus">TT_C0538</name>
</gene>
<comment type="function">
    <text evidence="1">Redox regulated molecular chaperone. Protects both thermally unfolding and oxidatively damaged proteins from irreversible aggregation. Plays an important role in the bacterial defense system toward oxidative stress.</text>
</comment>
<comment type="subcellular location">
    <subcellularLocation>
        <location evidence="1">Cytoplasm</location>
    </subcellularLocation>
</comment>
<comment type="PTM">
    <text evidence="1">Under oxidizing conditions two disulfide bonds are formed involving the reactive cysteines. Under reducing conditions zinc is bound to the reactive cysteines and the protein is inactive.</text>
</comment>
<comment type="similarity">
    <text evidence="1">Belongs to the HSP33 family.</text>
</comment>
<evidence type="ECO:0000255" key="1">
    <source>
        <dbReference type="HAMAP-Rule" id="MF_00117"/>
    </source>
</evidence>
<proteinExistence type="inferred from homology"/>